<reference key="1">
    <citation type="submission" date="2007-03" db="EMBL/GenBank/DDBJ databases">
        <authorList>
            <consortium name="NIH - Mammalian Gene Collection (MGC) project"/>
        </authorList>
    </citation>
    <scope>NUCLEOTIDE SEQUENCE [LARGE SCALE MRNA]</scope>
    <source>
        <strain>Hereford</strain>
        <tissue>Ascending colon</tissue>
    </source>
</reference>
<reference key="2">
    <citation type="journal article" date="1997" name="Endocrinology">
        <title>Cellular mechanisms involved during oxytocin-induced prostaglandin F2alpha production in endometrial epithelial cells in vitro: role of cyclooxygenase-2.</title>
        <authorList>
            <person name="Asselin E."/>
            <person name="Drolet P."/>
            <person name="Fortier M.A."/>
        </authorList>
    </citation>
    <scope>NUCLEOTIDE SEQUENCE [MRNA] OF 121-379</scope>
</reference>
<feature type="signal peptide" evidence="4">
    <location>
        <begin position="1"/>
        <end position="24"/>
    </location>
</feature>
<feature type="chain" id="PRO_0000163113" description="Prostaglandin G/H synthase 1">
    <location>
        <begin position="25"/>
        <end position="600"/>
    </location>
</feature>
<feature type="domain" description="EGF-like" evidence="5">
    <location>
        <begin position="32"/>
        <end position="70"/>
    </location>
</feature>
<feature type="active site" description="Proton acceptor" evidence="6">
    <location>
        <position position="207"/>
    </location>
</feature>
<feature type="active site" description="For cyclooxygenase activity" evidence="1">
    <location>
        <position position="385"/>
    </location>
</feature>
<feature type="binding site" description="axial binding residue" evidence="6">
    <location>
        <position position="388"/>
    </location>
    <ligand>
        <name>heme b</name>
        <dbReference type="ChEBI" id="CHEBI:60344"/>
    </ligand>
    <ligandPart>
        <name>Fe</name>
        <dbReference type="ChEBI" id="CHEBI:18248"/>
    </ligandPart>
</feature>
<feature type="site" description="Aspirin-acetylated serine" evidence="1">
    <location>
        <position position="530"/>
    </location>
</feature>
<feature type="glycosylation site" description="N-linked (GlcNAc...) asparagine" evidence="4">
    <location>
        <position position="68"/>
    </location>
</feature>
<feature type="glycosylation site" description="N-linked (GlcNAc...) asparagine" evidence="4">
    <location>
        <position position="104"/>
    </location>
</feature>
<feature type="glycosylation site" description="N-linked (GlcNAc...) asparagine" evidence="4">
    <location>
        <position position="144"/>
    </location>
</feature>
<feature type="glycosylation site" description="N-linked (GlcNAc...) asparagine" evidence="4">
    <location>
        <position position="410"/>
    </location>
</feature>
<feature type="disulfide bond" evidence="1">
    <location>
        <begin position="36"/>
        <end position="47"/>
    </location>
</feature>
<feature type="disulfide bond" evidence="1">
    <location>
        <begin position="37"/>
        <end position="159"/>
    </location>
</feature>
<feature type="disulfide bond" evidence="1">
    <location>
        <begin position="41"/>
        <end position="57"/>
    </location>
</feature>
<feature type="disulfide bond" evidence="1">
    <location>
        <begin position="59"/>
        <end position="69"/>
    </location>
</feature>
<feature type="disulfide bond" evidence="1">
    <location>
        <begin position="569"/>
        <end position="575"/>
    </location>
</feature>
<feature type="sequence conflict" description="In Ref. 2; AAC05591." evidence="7" ref="2">
    <original>D</original>
    <variation>G</variation>
    <location>
        <position position="229"/>
    </location>
</feature>
<feature type="sequence conflict" description="In Ref. 2; AAC05591." evidence="7" ref="2">
    <original>Q</original>
    <variation>R</variation>
    <location>
        <position position="241"/>
    </location>
</feature>
<feature type="sequence conflict" description="In Ref. 2; AAC05591." evidence="7" ref="2">
    <original>P</original>
    <variation>Q</variation>
    <location>
        <position position="263"/>
    </location>
</feature>
<feature type="sequence conflict" description="In Ref. 2; AAC05591." evidence="7" ref="2">
    <original>H</original>
    <variation>Q</variation>
    <location>
        <position position="320"/>
    </location>
</feature>
<evidence type="ECO:0000250" key="1"/>
<evidence type="ECO:0000250" key="2">
    <source>
        <dbReference type="UniProtKB" id="P05979"/>
    </source>
</evidence>
<evidence type="ECO:0000250" key="3">
    <source>
        <dbReference type="UniProtKB" id="P23219"/>
    </source>
</evidence>
<evidence type="ECO:0000255" key="4"/>
<evidence type="ECO:0000255" key="5">
    <source>
        <dbReference type="PROSITE-ProRule" id="PRU00076"/>
    </source>
</evidence>
<evidence type="ECO:0000255" key="6">
    <source>
        <dbReference type="PROSITE-ProRule" id="PRU00298"/>
    </source>
</evidence>
<evidence type="ECO:0000305" key="7"/>
<dbReference type="EC" id="1.14.99.1" evidence="3"/>
<dbReference type="EMBL" id="BC134517">
    <property type="protein sequence ID" value="AAI34518.1"/>
    <property type="molecule type" value="mRNA"/>
</dbReference>
<dbReference type="EMBL" id="AF004943">
    <property type="protein sequence ID" value="AAC05591.1"/>
    <property type="molecule type" value="mRNA"/>
</dbReference>
<dbReference type="RefSeq" id="NP_001098793.1">
    <property type="nucleotide sequence ID" value="NM_001105323.1"/>
</dbReference>
<dbReference type="SMR" id="O62664"/>
<dbReference type="FunCoup" id="O62664">
    <property type="interactions" value="102"/>
</dbReference>
<dbReference type="STRING" id="9913.ENSBTAP00000008833"/>
<dbReference type="BindingDB" id="O62664"/>
<dbReference type="ChEMBL" id="CHEMBL2860"/>
<dbReference type="DrugCentral" id="O62664"/>
<dbReference type="PeroxiBase" id="3332">
    <property type="entry name" value="BtPGHS01"/>
</dbReference>
<dbReference type="GlyCosmos" id="O62664">
    <property type="glycosylation" value="4 sites, No reported glycans"/>
</dbReference>
<dbReference type="GlyGen" id="O62664">
    <property type="glycosylation" value="4 sites"/>
</dbReference>
<dbReference type="PaxDb" id="9913-ENSBTAP00000008833"/>
<dbReference type="GeneID" id="282022"/>
<dbReference type="KEGG" id="bta:282022"/>
<dbReference type="CTD" id="5742"/>
<dbReference type="eggNOG" id="KOG2408">
    <property type="taxonomic scope" value="Eukaryota"/>
</dbReference>
<dbReference type="HOGENOM" id="CLU_022428_0_0_1"/>
<dbReference type="InParanoid" id="O62664"/>
<dbReference type="OrthoDB" id="823504at2759"/>
<dbReference type="TreeFam" id="TF329675"/>
<dbReference type="BRENDA" id="1.14.99.1">
    <property type="organism ID" value="908"/>
</dbReference>
<dbReference type="UniPathway" id="UPA00662"/>
<dbReference type="PRO" id="PR:O62664"/>
<dbReference type="Proteomes" id="UP000009136">
    <property type="component" value="Unplaced"/>
</dbReference>
<dbReference type="GO" id="GO:0005737">
    <property type="term" value="C:cytoplasm"/>
    <property type="evidence" value="ECO:0000318"/>
    <property type="project" value="GO_Central"/>
</dbReference>
<dbReference type="GO" id="GO:0005789">
    <property type="term" value="C:endoplasmic reticulum membrane"/>
    <property type="evidence" value="ECO:0007669"/>
    <property type="project" value="UniProtKB-SubCell"/>
</dbReference>
<dbReference type="GO" id="GO:0043005">
    <property type="term" value="C:neuron projection"/>
    <property type="evidence" value="ECO:0000318"/>
    <property type="project" value="GO_Central"/>
</dbReference>
<dbReference type="GO" id="GO:0020037">
    <property type="term" value="F:heme binding"/>
    <property type="evidence" value="ECO:0007669"/>
    <property type="project" value="InterPro"/>
</dbReference>
<dbReference type="GO" id="GO:0046872">
    <property type="term" value="F:metal ion binding"/>
    <property type="evidence" value="ECO:0007669"/>
    <property type="project" value="UniProtKB-KW"/>
</dbReference>
<dbReference type="GO" id="GO:0016702">
    <property type="term" value="F:oxidoreductase activity, acting on single donors with incorporation of molecular oxygen, incorporation of two atoms of oxygen"/>
    <property type="evidence" value="ECO:0000318"/>
    <property type="project" value="GO_Central"/>
</dbReference>
<dbReference type="GO" id="GO:0004601">
    <property type="term" value="F:peroxidase activity"/>
    <property type="evidence" value="ECO:0007669"/>
    <property type="project" value="UniProtKB-KW"/>
</dbReference>
<dbReference type="GO" id="GO:0004666">
    <property type="term" value="F:prostaglandin-endoperoxide synthase activity"/>
    <property type="evidence" value="ECO:0000318"/>
    <property type="project" value="GO_Central"/>
</dbReference>
<dbReference type="GO" id="GO:0019371">
    <property type="term" value="P:cyclooxygenase pathway"/>
    <property type="evidence" value="ECO:0000318"/>
    <property type="project" value="GO_Central"/>
</dbReference>
<dbReference type="GO" id="GO:0006979">
    <property type="term" value="P:response to oxidative stress"/>
    <property type="evidence" value="ECO:0007669"/>
    <property type="project" value="InterPro"/>
</dbReference>
<dbReference type="CDD" id="cd00054">
    <property type="entry name" value="EGF_CA"/>
    <property type="match status" value="1"/>
</dbReference>
<dbReference type="CDD" id="cd09816">
    <property type="entry name" value="prostaglandin_endoperoxide_synthase"/>
    <property type="match status" value="1"/>
</dbReference>
<dbReference type="FunFam" id="1.10.640.10:FF:000002">
    <property type="entry name" value="Prostaglandin G/H synthase 2"/>
    <property type="match status" value="1"/>
</dbReference>
<dbReference type="FunFam" id="2.10.25.10:FF:000235">
    <property type="entry name" value="Prostaglandin G/H synthase 2"/>
    <property type="match status" value="1"/>
</dbReference>
<dbReference type="Gene3D" id="1.10.640.10">
    <property type="entry name" value="Haem peroxidase domain superfamily, animal type"/>
    <property type="match status" value="1"/>
</dbReference>
<dbReference type="Gene3D" id="2.10.25.10">
    <property type="entry name" value="Laminin"/>
    <property type="match status" value="1"/>
</dbReference>
<dbReference type="InterPro" id="IPR000742">
    <property type="entry name" value="EGF-like_dom"/>
</dbReference>
<dbReference type="InterPro" id="IPR019791">
    <property type="entry name" value="Haem_peroxidase_animal"/>
</dbReference>
<dbReference type="InterPro" id="IPR010255">
    <property type="entry name" value="Haem_peroxidase_sf"/>
</dbReference>
<dbReference type="InterPro" id="IPR037120">
    <property type="entry name" value="Haem_peroxidase_sf_animal"/>
</dbReference>
<dbReference type="InterPro" id="IPR050783">
    <property type="entry name" value="Oxylipin_biosynth_metab"/>
</dbReference>
<dbReference type="PANTHER" id="PTHR11903">
    <property type="entry name" value="PROSTAGLANDIN G/H SYNTHASE"/>
    <property type="match status" value="1"/>
</dbReference>
<dbReference type="PANTHER" id="PTHR11903:SF6">
    <property type="entry name" value="PROSTAGLANDIN G_H SYNTHASE 1"/>
    <property type="match status" value="1"/>
</dbReference>
<dbReference type="Pfam" id="PF03098">
    <property type="entry name" value="An_peroxidase"/>
    <property type="match status" value="1"/>
</dbReference>
<dbReference type="PRINTS" id="PR00457">
    <property type="entry name" value="ANPEROXIDASE"/>
</dbReference>
<dbReference type="SUPFAM" id="SSF57196">
    <property type="entry name" value="EGF/Laminin"/>
    <property type="match status" value="1"/>
</dbReference>
<dbReference type="SUPFAM" id="SSF48113">
    <property type="entry name" value="Heme-dependent peroxidases"/>
    <property type="match status" value="1"/>
</dbReference>
<dbReference type="PROSITE" id="PS50026">
    <property type="entry name" value="EGF_3"/>
    <property type="match status" value="1"/>
</dbReference>
<dbReference type="PROSITE" id="PS50292">
    <property type="entry name" value="PEROXIDASE_3"/>
    <property type="match status" value="1"/>
</dbReference>
<proteinExistence type="evidence at transcript level"/>
<sequence>MSRQGISLRFPLLLLLLSPSPVLPADPGAPAPVNPCCYYPCQHQGICVRFGLDRYQCDCTRTGYYGPNCTIPEIWTWLRTTLRPSPSFVHFLLTHGRWLWDFVNATFIRDKLMRLVLTVRSNLIPSPPTYNVAHDYISWESFSNVSYYTRILPSVPRDCPTPMGTKGKKQLPDAEFLSRRFLLRRKFIPDPQGTNLMFAFFAQHFTHQFFKTSGKMGPGFTKALGHGVDLGHIYGDNLERQYQLRLFKDGKLKYQMLNGEVYPPSVEEAPVLMHYPRGIPPQSQMAVGQEVFGLLPGLMVYATIWLREHNRVCDLLKAEHPTWGDEQLFQTARLILIGETIKIVIEEYVQQLSGYFLQLKFDPELLFGAQFQYRNRIAMEFNQLYHWHPLMPDSFRVGPQDYSYEQFLFNTSMLVDYGVEALVDAFSRQPAGRIGGGRNIDHHILHVAVDVIKESRELRLQPFNEYRKRFGMKPYTSFQELTGEKEMAAELEELYGDIDALEFYPGLLLEKCHPNSIFGESMIEMGAPFSLKGLLGNPICSPEYWKASTFGGDVGFNLVKTATLKKLVCLNTKTCPYVSFHVPDPHREDRPGVERPPTEL</sequence>
<gene>
    <name type="primary">PTGS1</name>
    <name type="synonym">COX-1</name>
    <name type="synonym">COX1</name>
</gene>
<keyword id="KW-0223">Dioxygenase</keyword>
<keyword id="KW-1015">Disulfide bond</keyword>
<keyword id="KW-0245">EGF-like domain</keyword>
<keyword id="KW-0256">Endoplasmic reticulum</keyword>
<keyword id="KW-0275">Fatty acid biosynthesis</keyword>
<keyword id="KW-0276">Fatty acid metabolism</keyword>
<keyword id="KW-0325">Glycoprotein</keyword>
<keyword id="KW-0349">Heme</keyword>
<keyword id="KW-0408">Iron</keyword>
<keyword id="KW-0444">Lipid biosynthesis</keyword>
<keyword id="KW-0443">Lipid metabolism</keyword>
<keyword id="KW-0472">Membrane</keyword>
<keyword id="KW-0479">Metal-binding</keyword>
<keyword id="KW-0492">Microsome</keyword>
<keyword id="KW-0560">Oxidoreductase</keyword>
<keyword id="KW-0575">Peroxidase</keyword>
<keyword id="KW-0643">Prostaglandin biosynthesis</keyword>
<keyword id="KW-0644">Prostaglandin metabolism</keyword>
<keyword id="KW-1185">Reference proteome</keyword>
<keyword id="KW-0732">Signal</keyword>
<organism>
    <name type="scientific">Bos taurus</name>
    <name type="common">Bovine</name>
    <dbReference type="NCBI Taxonomy" id="9913"/>
    <lineage>
        <taxon>Eukaryota</taxon>
        <taxon>Metazoa</taxon>
        <taxon>Chordata</taxon>
        <taxon>Craniata</taxon>
        <taxon>Vertebrata</taxon>
        <taxon>Euteleostomi</taxon>
        <taxon>Mammalia</taxon>
        <taxon>Eutheria</taxon>
        <taxon>Laurasiatheria</taxon>
        <taxon>Artiodactyla</taxon>
        <taxon>Ruminantia</taxon>
        <taxon>Pecora</taxon>
        <taxon>Bovidae</taxon>
        <taxon>Bovinae</taxon>
        <taxon>Bos</taxon>
    </lineage>
</organism>
<protein>
    <recommendedName>
        <fullName evidence="7">Prostaglandin G/H synthase 1</fullName>
        <ecNumber evidence="3">1.14.99.1</ecNumber>
    </recommendedName>
    <alternativeName>
        <fullName>Cyclooxygenase-1</fullName>
        <shortName>COX-1</shortName>
    </alternativeName>
    <alternativeName>
        <fullName>Prostaglandin H2 synthase 1</fullName>
        <shortName>PGH synthase 1</shortName>
        <shortName>PGHS-1</shortName>
        <shortName>PHS 1</shortName>
    </alternativeName>
    <alternativeName>
        <fullName>Prostaglandin-endoperoxide synthase 1</fullName>
    </alternativeName>
</protein>
<comment type="function">
    <text evidence="2">Dual cyclooxygenase and peroxidase that plays an important role in the biosynthesis pathway of prostanoids, a class of C20 oxylipins mainly derived from arachidonate ((5Z,8Z,11Z,14Z)-eicosatetraenoate, AA, C20:4(n-6)), with a particular role in the inflammatory response. The cyclooxygenase activity oxygenates AA to the hydroperoxy endoperoxide prostaglandin G2 (PGG2), and the peroxidase activity reduces PGG2 to the hydroxy endoperoxide prostaglandin H2 (PGH2), the precursor of all 2-series prostaglandins and thromboxanes. This complex transformation is initiated by abstraction of hydrogen at carbon 13 (with S-stereochemistry), followed by insertion of molecular O2 to form the endoperoxide bridge between carbon 9 and 11 that defines prostaglandins. The insertion of a second molecule of O2 (bis-oxygenase activity) yields a hydroperoxy group in PGG2 that is then reduced to PGH2 by two electrons. Involved in the constitutive production of prostanoids in particular in the stomach and platelets. In gastric epithelial cells, it is a key step in the generation of prostaglandins, such as prostaglandin E2 (PGE2), which plays an important role in cytoprotection. In platelets, it is involved in the generation of thromboxane A2 (TXA2), which promotes platelet activation and aggregation, vasoconstriction and proliferation of vascular smooth muscle cells. Can also use linoleate (LA, (9Z,12Z)-octadecadienoate, C18:2(n-6)) as substrate and produce hydroxyoctadecadienoates (HODEs) in a regio- and stereospecific manner, being (9R)-HODE ((9R)-hydroxy-(10E,12Z)-octadecadienoate) and (13S)-HODE ((13S)-hydroxy-(9Z,11E)-octadecadienoate) its major products.</text>
</comment>
<comment type="catalytic activity">
    <reaction evidence="3">
        <text>(5Z,8Z,11Z,14Z)-eicosatetraenoate + AH2 + 2 O2 = prostaglandin H2 + A + H2O</text>
        <dbReference type="Rhea" id="RHEA:23728"/>
        <dbReference type="ChEBI" id="CHEBI:13193"/>
        <dbReference type="ChEBI" id="CHEBI:15377"/>
        <dbReference type="ChEBI" id="CHEBI:15379"/>
        <dbReference type="ChEBI" id="CHEBI:17499"/>
        <dbReference type="ChEBI" id="CHEBI:32395"/>
        <dbReference type="ChEBI" id="CHEBI:57405"/>
        <dbReference type="EC" id="1.14.99.1"/>
    </reaction>
    <physiologicalReaction direction="left-to-right" evidence="3">
        <dbReference type="Rhea" id="RHEA:23729"/>
    </physiologicalReaction>
</comment>
<comment type="catalytic activity">
    <reaction evidence="3">
        <text>(5Z,8Z,11Z,14Z)-eicosatetraenoate + 2 O2 = prostaglandin G2</text>
        <dbReference type="Rhea" id="RHEA:42596"/>
        <dbReference type="ChEBI" id="CHEBI:15379"/>
        <dbReference type="ChEBI" id="CHEBI:32395"/>
        <dbReference type="ChEBI" id="CHEBI:82629"/>
    </reaction>
    <physiologicalReaction direction="left-to-right" evidence="3">
        <dbReference type="Rhea" id="RHEA:42597"/>
    </physiologicalReaction>
</comment>
<comment type="catalytic activity">
    <reaction evidence="3">
        <text>prostaglandin G2 + AH2 = prostaglandin H2 + A + H2O</text>
        <dbReference type="Rhea" id="RHEA:42600"/>
        <dbReference type="ChEBI" id="CHEBI:13193"/>
        <dbReference type="ChEBI" id="CHEBI:15377"/>
        <dbReference type="ChEBI" id="CHEBI:17499"/>
        <dbReference type="ChEBI" id="CHEBI:57405"/>
        <dbReference type="ChEBI" id="CHEBI:82629"/>
    </reaction>
    <physiologicalReaction direction="left-to-right" evidence="3">
        <dbReference type="Rhea" id="RHEA:42601"/>
    </physiologicalReaction>
</comment>
<comment type="catalytic activity">
    <reaction evidence="2">
        <text>(9Z,12Z)-octadecadienoate + AH2 + O2 = (9R)-hydroxy-(10E,12Z)-octadecadienoate + A + H2O</text>
        <dbReference type="Rhea" id="RHEA:75447"/>
        <dbReference type="ChEBI" id="CHEBI:13193"/>
        <dbReference type="ChEBI" id="CHEBI:15377"/>
        <dbReference type="ChEBI" id="CHEBI:15379"/>
        <dbReference type="ChEBI" id="CHEBI:17499"/>
        <dbReference type="ChEBI" id="CHEBI:30245"/>
        <dbReference type="ChEBI" id="CHEBI:77895"/>
    </reaction>
    <physiologicalReaction direction="left-to-right" evidence="2">
        <dbReference type="Rhea" id="RHEA:75448"/>
    </physiologicalReaction>
</comment>
<comment type="catalytic activity">
    <reaction evidence="2">
        <text>(9Z,12Z)-octadecadienoate + AH2 + O2 = (9S)-hydroxy-(10E,12Z)-octadecadienoate + A + H2O</text>
        <dbReference type="Rhea" id="RHEA:75459"/>
        <dbReference type="ChEBI" id="CHEBI:13193"/>
        <dbReference type="ChEBI" id="CHEBI:15377"/>
        <dbReference type="ChEBI" id="CHEBI:15379"/>
        <dbReference type="ChEBI" id="CHEBI:17499"/>
        <dbReference type="ChEBI" id="CHEBI:30245"/>
        <dbReference type="ChEBI" id="CHEBI:77852"/>
    </reaction>
    <physiologicalReaction direction="left-to-right" evidence="2">
        <dbReference type="Rhea" id="RHEA:75460"/>
    </physiologicalReaction>
</comment>
<comment type="catalytic activity">
    <reaction evidence="2">
        <text>(9Z,12Z)-octadecadienoate + AH2 + O2 = (13S)-hydroxy-(9Z,11E)-octadecadienoate + A + H2O</text>
        <dbReference type="Rhea" id="RHEA:75451"/>
        <dbReference type="ChEBI" id="CHEBI:13193"/>
        <dbReference type="ChEBI" id="CHEBI:15377"/>
        <dbReference type="ChEBI" id="CHEBI:15379"/>
        <dbReference type="ChEBI" id="CHEBI:17499"/>
        <dbReference type="ChEBI" id="CHEBI:30245"/>
        <dbReference type="ChEBI" id="CHEBI:90850"/>
    </reaction>
    <physiologicalReaction direction="left-to-right" evidence="2">
        <dbReference type="Rhea" id="RHEA:75452"/>
    </physiologicalReaction>
</comment>
<comment type="catalytic activity">
    <reaction evidence="2">
        <text>(9Z,12Z)-octadecadienoate + AH2 + O2 = (13R)-hydroxy-(9Z,11E)-octadecadienoate + A + H2O</text>
        <dbReference type="Rhea" id="RHEA:75455"/>
        <dbReference type="ChEBI" id="CHEBI:13193"/>
        <dbReference type="ChEBI" id="CHEBI:15377"/>
        <dbReference type="ChEBI" id="CHEBI:15379"/>
        <dbReference type="ChEBI" id="CHEBI:17499"/>
        <dbReference type="ChEBI" id="CHEBI:30245"/>
        <dbReference type="ChEBI" id="CHEBI:136655"/>
    </reaction>
    <physiologicalReaction direction="left-to-right" evidence="2">
        <dbReference type="Rhea" id="RHEA:75456"/>
    </physiologicalReaction>
</comment>
<comment type="cofactor">
    <cofactor evidence="1">
        <name>heme b</name>
        <dbReference type="ChEBI" id="CHEBI:60344"/>
    </cofactor>
    <text evidence="1">Binds 1 heme b (iron(II)-protoporphyrin IX) group per subunit.</text>
</comment>
<comment type="activity regulation">
    <text evidence="3">The cyclooxygenase activity is inhibited by nonsteroidal anti-inflammatory drugs (NSAIDs) including ibuprofen, flurbiprofen, ketoprofen, naproxen, flurbiprofen, anirolac, fenclofenac and diclofenac.</text>
</comment>
<comment type="pathway">
    <text evidence="3">Lipid metabolism; prostaglandin biosynthesis.</text>
</comment>
<comment type="subunit">
    <text evidence="1">Homodimer.</text>
</comment>
<comment type="subcellular location">
    <subcellularLocation>
        <location>Microsome membrane</location>
        <topology>Peripheral membrane protein</topology>
    </subcellularLocation>
    <subcellularLocation>
        <location>Endoplasmic reticulum membrane</location>
        <topology>Peripheral membrane protein</topology>
    </subcellularLocation>
</comment>
<comment type="miscellaneous">
    <text>The conversion of arachidonate to prostaglandin H2 is a 2 step reaction: a cyclooxygenase (COX) reaction which converts arachidonate to prostaglandin G2 (PGG2) and a peroxidase reaction in which PGG2 is reduced to prostaglandin H2 (PGH2). The cyclooxygenase reaction occurs in a hydrophobic channel in the core of the enzyme. The peroxidase reaction occurs at a heme-containing active site located near the protein surface. The nonsteroidal anti-inflammatory drugs (NSAIDs) binding site corresponds to the cyclooxygenase active site.</text>
</comment>
<comment type="miscellaneous">
    <text>Conversion of arachidonate to prostaglandin H2 is mediated by 2 different isozymes: the constitutive PTGS1 and the inducible PTGS2. PTGS1 is expressed constitutively and generally produces prostanoids acutely in response to hormonal stimuli to fine-tune physiological processes requiring instantaneous, continuous regulation (e.g. hemostasis). PTGS2 is inducible and typically produces prostanoids that mediate responses to physiological stresses such as infection and inflammation.</text>
</comment>
<comment type="miscellaneous">
    <text>PTGS1 and PTGS2 are the targets of nonsteroidal anti-inflammatory drugs (NSAIDs) including aspirin and ibuprofen. Aspirin is able to produce an irreversible inactivation of the enzyme through a serine acetylation. Inhibition of the PGHSs with NSAIDs acutely reduces inflammation, pain, and fever, and long-term use of these drugs reduces fatal thrombotic events, as well as the development of colon cancer and Alzheimer's disease. PTGS2 is the principal isozyme responsible for production of inflammatory prostaglandins. New generation PTGSs inhibitors strive to be selective for PTGS2, to avoid side effects such as gastrointestinal complications and ulceration.</text>
</comment>
<comment type="similarity">
    <text evidence="7">Belongs to the prostaglandin G/H synthase family.</text>
</comment>
<name>PGH1_BOVIN</name>
<accession>O62664</accession>
<accession>A7YWD4</accession>